<protein>
    <recommendedName>
        <fullName evidence="1">UvrABC system protein B</fullName>
        <shortName evidence="1">Protein UvrB</shortName>
    </recommendedName>
    <alternativeName>
        <fullName evidence="1">Excinuclease ABC subunit B</fullName>
    </alternativeName>
</protein>
<dbReference type="EMBL" id="AM406671">
    <property type="protein sequence ID" value="CAL97138.1"/>
    <property type="molecule type" value="Genomic_DNA"/>
</dbReference>
<dbReference type="RefSeq" id="WP_011834568.1">
    <property type="nucleotide sequence ID" value="NC_009004.1"/>
</dbReference>
<dbReference type="SMR" id="A2RIP3"/>
<dbReference type="STRING" id="416870.llmg_0534"/>
<dbReference type="KEGG" id="llm:llmg_0534"/>
<dbReference type="eggNOG" id="COG0556">
    <property type="taxonomic scope" value="Bacteria"/>
</dbReference>
<dbReference type="HOGENOM" id="CLU_009621_2_1_9"/>
<dbReference type="OrthoDB" id="9806651at2"/>
<dbReference type="PhylomeDB" id="A2RIP3"/>
<dbReference type="Proteomes" id="UP000000364">
    <property type="component" value="Chromosome"/>
</dbReference>
<dbReference type="GO" id="GO:0005737">
    <property type="term" value="C:cytoplasm"/>
    <property type="evidence" value="ECO:0007669"/>
    <property type="project" value="UniProtKB-SubCell"/>
</dbReference>
<dbReference type="GO" id="GO:0009380">
    <property type="term" value="C:excinuclease repair complex"/>
    <property type="evidence" value="ECO:0007669"/>
    <property type="project" value="InterPro"/>
</dbReference>
<dbReference type="GO" id="GO:0005524">
    <property type="term" value="F:ATP binding"/>
    <property type="evidence" value="ECO:0007669"/>
    <property type="project" value="UniProtKB-UniRule"/>
</dbReference>
<dbReference type="GO" id="GO:0016887">
    <property type="term" value="F:ATP hydrolysis activity"/>
    <property type="evidence" value="ECO:0007669"/>
    <property type="project" value="InterPro"/>
</dbReference>
<dbReference type="GO" id="GO:0003677">
    <property type="term" value="F:DNA binding"/>
    <property type="evidence" value="ECO:0007669"/>
    <property type="project" value="UniProtKB-UniRule"/>
</dbReference>
<dbReference type="GO" id="GO:0009381">
    <property type="term" value="F:excinuclease ABC activity"/>
    <property type="evidence" value="ECO:0007669"/>
    <property type="project" value="UniProtKB-UniRule"/>
</dbReference>
<dbReference type="GO" id="GO:0004386">
    <property type="term" value="F:helicase activity"/>
    <property type="evidence" value="ECO:0007669"/>
    <property type="project" value="UniProtKB-KW"/>
</dbReference>
<dbReference type="GO" id="GO:0006289">
    <property type="term" value="P:nucleotide-excision repair"/>
    <property type="evidence" value="ECO:0007669"/>
    <property type="project" value="UniProtKB-UniRule"/>
</dbReference>
<dbReference type="GO" id="GO:0009432">
    <property type="term" value="P:SOS response"/>
    <property type="evidence" value="ECO:0007669"/>
    <property type="project" value="UniProtKB-UniRule"/>
</dbReference>
<dbReference type="CDD" id="cd17916">
    <property type="entry name" value="DEXHc_UvrB"/>
    <property type="match status" value="1"/>
</dbReference>
<dbReference type="CDD" id="cd18790">
    <property type="entry name" value="SF2_C_UvrB"/>
    <property type="match status" value="1"/>
</dbReference>
<dbReference type="Gene3D" id="3.40.50.300">
    <property type="entry name" value="P-loop containing nucleotide triphosphate hydrolases"/>
    <property type="match status" value="3"/>
</dbReference>
<dbReference type="Gene3D" id="4.10.860.10">
    <property type="entry name" value="UVR domain"/>
    <property type="match status" value="1"/>
</dbReference>
<dbReference type="HAMAP" id="MF_00204">
    <property type="entry name" value="UvrB"/>
    <property type="match status" value="1"/>
</dbReference>
<dbReference type="InterPro" id="IPR006935">
    <property type="entry name" value="Helicase/UvrB_N"/>
</dbReference>
<dbReference type="InterPro" id="IPR014001">
    <property type="entry name" value="Helicase_ATP-bd"/>
</dbReference>
<dbReference type="InterPro" id="IPR001650">
    <property type="entry name" value="Helicase_C-like"/>
</dbReference>
<dbReference type="InterPro" id="IPR027417">
    <property type="entry name" value="P-loop_NTPase"/>
</dbReference>
<dbReference type="InterPro" id="IPR001943">
    <property type="entry name" value="UVR_dom"/>
</dbReference>
<dbReference type="InterPro" id="IPR036876">
    <property type="entry name" value="UVR_dom_sf"/>
</dbReference>
<dbReference type="InterPro" id="IPR004807">
    <property type="entry name" value="UvrB"/>
</dbReference>
<dbReference type="InterPro" id="IPR041471">
    <property type="entry name" value="UvrB_inter"/>
</dbReference>
<dbReference type="InterPro" id="IPR024759">
    <property type="entry name" value="UvrB_YAD/RRR_dom"/>
</dbReference>
<dbReference type="NCBIfam" id="NF003673">
    <property type="entry name" value="PRK05298.1"/>
    <property type="match status" value="1"/>
</dbReference>
<dbReference type="NCBIfam" id="TIGR00631">
    <property type="entry name" value="uvrb"/>
    <property type="match status" value="1"/>
</dbReference>
<dbReference type="PANTHER" id="PTHR24029">
    <property type="entry name" value="UVRABC SYSTEM PROTEIN B"/>
    <property type="match status" value="1"/>
</dbReference>
<dbReference type="PANTHER" id="PTHR24029:SF0">
    <property type="entry name" value="UVRABC SYSTEM PROTEIN B"/>
    <property type="match status" value="1"/>
</dbReference>
<dbReference type="Pfam" id="PF00271">
    <property type="entry name" value="Helicase_C"/>
    <property type="match status" value="1"/>
</dbReference>
<dbReference type="Pfam" id="PF04851">
    <property type="entry name" value="ResIII"/>
    <property type="match status" value="1"/>
</dbReference>
<dbReference type="Pfam" id="PF02151">
    <property type="entry name" value="UVR"/>
    <property type="match status" value="1"/>
</dbReference>
<dbReference type="Pfam" id="PF12344">
    <property type="entry name" value="UvrB"/>
    <property type="match status" value="1"/>
</dbReference>
<dbReference type="Pfam" id="PF17757">
    <property type="entry name" value="UvrB_inter"/>
    <property type="match status" value="1"/>
</dbReference>
<dbReference type="SMART" id="SM00487">
    <property type="entry name" value="DEXDc"/>
    <property type="match status" value="1"/>
</dbReference>
<dbReference type="SMART" id="SM00490">
    <property type="entry name" value="HELICc"/>
    <property type="match status" value="1"/>
</dbReference>
<dbReference type="SUPFAM" id="SSF46600">
    <property type="entry name" value="C-terminal UvrC-binding domain of UvrB"/>
    <property type="match status" value="1"/>
</dbReference>
<dbReference type="SUPFAM" id="SSF52540">
    <property type="entry name" value="P-loop containing nucleoside triphosphate hydrolases"/>
    <property type="match status" value="2"/>
</dbReference>
<dbReference type="PROSITE" id="PS51192">
    <property type="entry name" value="HELICASE_ATP_BIND_1"/>
    <property type="match status" value="1"/>
</dbReference>
<dbReference type="PROSITE" id="PS51194">
    <property type="entry name" value="HELICASE_CTER"/>
    <property type="match status" value="1"/>
</dbReference>
<dbReference type="PROSITE" id="PS50151">
    <property type="entry name" value="UVR"/>
    <property type="match status" value="1"/>
</dbReference>
<keyword id="KW-0067">ATP-binding</keyword>
<keyword id="KW-0963">Cytoplasm</keyword>
<keyword id="KW-0227">DNA damage</keyword>
<keyword id="KW-0228">DNA excision</keyword>
<keyword id="KW-0234">DNA repair</keyword>
<keyword id="KW-0267">Excision nuclease</keyword>
<keyword id="KW-0347">Helicase</keyword>
<keyword id="KW-0378">Hydrolase</keyword>
<keyword id="KW-0547">Nucleotide-binding</keyword>
<keyword id="KW-0742">SOS response</keyword>
<reference key="1">
    <citation type="journal article" date="2007" name="J. Bacteriol.">
        <title>The complete genome sequence of the lactic acid bacterial paradigm Lactococcus lactis subsp. cremoris MG1363.</title>
        <authorList>
            <person name="Wegmann U."/>
            <person name="O'Connell-Motherway M."/>
            <person name="Zomer A."/>
            <person name="Buist G."/>
            <person name="Shearman C."/>
            <person name="Canchaya C."/>
            <person name="Ventura M."/>
            <person name="Goesmann A."/>
            <person name="Gasson M.J."/>
            <person name="Kuipers O.P."/>
            <person name="van Sinderen D."/>
            <person name="Kok J."/>
        </authorList>
    </citation>
    <scope>NUCLEOTIDE SEQUENCE [LARGE SCALE GENOMIC DNA]</scope>
    <source>
        <strain>MG1363</strain>
    </source>
</reference>
<proteinExistence type="inferred from homology"/>
<name>UVRB_LACLM</name>
<comment type="function">
    <text evidence="1">The UvrABC repair system catalyzes the recognition and processing of DNA lesions. A damage recognition complex composed of 2 UvrA and 2 UvrB subunits scans DNA for abnormalities. Upon binding of the UvrA(2)B(2) complex to a putative damaged site, the DNA wraps around one UvrB monomer. DNA wrap is dependent on ATP binding by UvrB and probably causes local melting of the DNA helix, facilitating insertion of UvrB beta-hairpin between the DNA strands. Then UvrB probes one DNA strand for the presence of a lesion. If a lesion is found the UvrA subunits dissociate and the UvrB-DNA preincision complex is formed. This complex is subsequently bound by UvrC and the second UvrB is released. If no lesion is found, the DNA wraps around the other UvrB subunit that will check the other stand for damage.</text>
</comment>
<comment type="subunit">
    <text evidence="1">Forms a heterotetramer with UvrA during the search for lesions. Interacts with UvrC in an incision complex.</text>
</comment>
<comment type="subcellular location">
    <subcellularLocation>
        <location evidence="1">Cytoplasm</location>
    </subcellularLocation>
</comment>
<comment type="domain">
    <text evidence="1">The beta-hairpin motif is involved in DNA binding.</text>
</comment>
<comment type="similarity">
    <text evidence="1">Belongs to the UvrB family.</text>
</comment>
<evidence type="ECO:0000255" key="1">
    <source>
        <dbReference type="HAMAP-Rule" id="MF_00204"/>
    </source>
</evidence>
<organism>
    <name type="scientific">Lactococcus lactis subsp. cremoris (strain MG1363)</name>
    <dbReference type="NCBI Taxonomy" id="416870"/>
    <lineage>
        <taxon>Bacteria</taxon>
        <taxon>Bacillati</taxon>
        <taxon>Bacillota</taxon>
        <taxon>Bacilli</taxon>
        <taxon>Lactobacillales</taxon>
        <taxon>Streptococcaceae</taxon>
        <taxon>Lactococcus</taxon>
        <taxon>Lactococcus cremoris subsp. cremoris</taxon>
    </lineage>
</organism>
<feature type="chain" id="PRO_1000077899" description="UvrABC system protein B">
    <location>
        <begin position="1"/>
        <end position="692"/>
    </location>
</feature>
<feature type="domain" description="Helicase ATP-binding" evidence="1">
    <location>
        <begin position="32"/>
        <end position="187"/>
    </location>
</feature>
<feature type="domain" description="Helicase C-terminal" evidence="1">
    <location>
        <begin position="436"/>
        <end position="631"/>
    </location>
</feature>
<feature type="domain" description="UVR" evidence="1">
    <location>
        <begin position="656"/>
        <end position="691"/>
    </location>
</feature>
<feature type="short sequence motif" description="Beta-hairpin">
    <location>
        <begin position="98"/>
        <end position="121"/>
    </location>
</feature>
<feature type="binding site" evidence="1">
    <location>
        <begin position="45"/>
        <end position="52"/>
    </location>
    <ligand>
        <name>ATP</name>
        <dbReference type="ChEBI" id="CHEBI:30616"/>
    </ligand>
</feature>
<sequence>MAIERITDNKFELVSKYDPAGDQGQAISELVENIENGEKAQILRGATGTGKTYTMSQVIAQTGKPTLVMAHNKTLAGQLYSEFKEFFPNNAVEYFVSYYDYYQPEAYVPSSDTYIEKDSSVNDEIDKLRHSATSSLLERNDVIVVASVSCIYGLGSPKEYQDSVVSLRPGQEISRDQLLNDLVGIQFERNDIDFQRGCFRVRGDVVEVFPASRDEHAFRVEFFGDEIDRIREIEVLTGQVLGEVDHLAIFPATHFMTNDDRMEESIAKIEAELEAQLKVFRSEGKLLEAQRLEQRTNYDIEMLREMGYCNGVENYSRHMDGREEGEPPYTLLDFFPDDFMIMIDESHMTMGQVKGMYNGDRARKEMLCNYGFRLPSALDNRPLKREEFESHVHQIVYVSATPGDYEMEQTDTIVEQIIRPTGLLDPVVEVRPMMGQIDDLVGEIHKRAEKNERVFVTTLTKKMSEDLTAYFKEMGIKVKYMHSDIKTLERTEIIRDLRLGVFDVLVGINLLREGIDVPEVSLVAILDADKEGFLRNERGLIQTIGRAARNSEGHVILYSDMAKALDENDPADKEILDSGYYTEYEGKKYKITRSMKHAMDETARRRDIQMAYNEEHGITPQTIKKEIRDLIAITKKTDSGELEEVDASAMNKKERKALVKKLEKEMQQAAAALDFEGAAQLRDMVLELRAMD</sequence>
<accession>A2RIP3</accession>
<gene>
    <name evidence="1" type="primary">uvrB</name>
    <name type="ordered locus">llmg_0534</name>
</gene>